<sequence>MSTHDMNHHPPRKSHSKRDKPSSSNSGPKIENHKCKWAWQKVFETGKSFLRRDGFPQDCKSKEDFERIKRTGVRKTSENMLEDPRKNFESLQQSSVYQTNSFRNPRYLCRAHLRVDSYYCTIPPKREVSLFNMDDNCTEVLLRDFAKDCGKVEKAYVCIHPETKRHMKMAYVKFATVKEAHNFYSMYHAQNLLATKCTPRIDPFLSILNEEYEVATNGQVLPILPDDLASIDPSVLRDLRANFLRDQNEKYELAMRNTYEDEGGMLSGVIMDTSDHYERDYTMDHDVGPSSMKMSPIPPPPIKEESPPPPPPPPVASVSNLAPVPSVQLPYYNNIQPSSSTMHMPEFRPTEPPPSYSREDPYRSTSRSSLSRHRNRSRSPSDGMDRSGRSSSRRTHRRPESRNGSKNANGDVVKYETYKMEKRKIKYEGGNKKYEQVHIKERTAVIRGKNQLENVSSESASGSSSVDTYPDFSDEERKKKKRPKSPNRSKKDSRAFGWDSTDESDEDTRRRRSGRSQNRSSERKFQTTSSSSTRRELSSTHTNSVPNLKSHETPPPPPPKGHPSVHLQTPYQHVQPQMIPATYYNLPPQHMAPPPITTSLPPFCDFSQPPPGFTPTFKPITNAPLPTPYQASNIPQPGLVQIAALSAAPEPFSSIPGPPPGPAPIQEDVGRAESPEKPSLSERFSGIFGPTQREEPAQVEVEYDYPLKHSESHDDRHSLEDMDVEVSSDGETVSNVEKIECMEEKKRQDLERIAIARTPIVKKCKKRMMDELSRKVAEDIRQQIMRQCFAALDEKLHLKAIADEEKRKKEREEKARQEAEKPSNHLIADMMTLYNNQSFASSSRGFYRKQKPIPKSHPKHQEHHHHAKASVSTPVHSSSTSRNSSVAPTPQRTVSTSSSSSSAATSARVSEDESDSDSTPGEVQRRKTSVLSNDKRRRRASFSSTSIQSSPERQRDVSSSSRTSSSSSTSSMKQEETADEKSRKRKLIMSSDESSTTGSTATSVVSSRQSSLEPQQEKTDGEPPKKKSQTDFISERVSKIEGEERPLPEPVETSGPIIGDSSYLPYKIVHWEKAGIIEMNLPANSIRAHEYHPFTTEHCYFGIDDPRQPKIQIFDHSPCKSEPGSEPLKITPAPWGPIDNVAETGPLIYMDVVTAPKTVQKKQKPRKQVFEKDPYEYYEPPPTKRPAPPPRFKKTFKPRSEEEKKKIIGDCEDLPDLEDQWYLRAALNEMQSEVKSADELPWKKMLTFKEMLRSEDPLLRLNPIRSKKGLPDAFYEDEELDGVIPVAAGCSRARPYEKMTMKQKRSLVRRPDNESHPTAIFSERDETAIRHQHLASKDMRLLQRRLLTSLGDANNDFFKINQLKFRKKMIKFARSRIHGWGLYAMESIAPDEMIVEYIGQTIRSLVAEEREKAYERRGIGSSYLFRIDLHHVIDATKRGNFARFINHSCQPNCYAKVLTIEGEKRIVIYSRTIIKKGEEITYDYKFPIEDDKIDCLCGAKTCRGYLN</sequence>
<dbReference type="EC" id="2.1.1.354" evidence="1"/>
<dbReference type="EMBL" id="FO080680">
    <property type="protein sequence ID" value="CCD65735.1"/>
    <property type="molecule type" value="Genomic_DNA"/>
</dbReference>
<dbReference type="EMBL" id="FO080680">
    <property type="protein sequence ID" value="CCD65734.1"/>
    <property type="molecule type" value="Genomic_DNA"/>
</dbReference>
<dbReference type="EMBL" id="FO080680">
    <property type="protein sequence ID" value="CCD65736.1"/>
    <property type="molecule type" value="Genomic_DNA"/>
</dbReference>
<dbReference type="PIR" id="A88445">
    <property type="entry name" value="A88445"/>
</dbReference>
<dbReference type="RefSeq" id="NP_498039.1">
    <molecule id="Q18221-3"/>
    <property type="nucleotide sequence ID" value="NM_065638.6"/>
</dbReference>
<dbReference type="RefSeq" id="NP_498040.1">
    <molecule id="Q18221-1"/>
    <property type="nucleotide sequence ID" value="NM_065639.7"/>
</dbReference>
<dbReference type="RefSeq" id="NP_498041.1">
    <molecule id="Q18221-2"/>
    <property type="nucleotide sequence ID" value="NM_065640.6"/>
</dbReference>
<dbReference type="SMR" id="Q18221"/>
<dbReference type="BioGRID" id="40896">
    <property type="interactions" value="5"/>
</dbReference>
<dbReference type="ELM" id="Q18221"/>
<dbReference type="FunCoup" id="Q18221">
    <property type="interactions" value="384"/>
</dbReference>
<dbReference type="STRING" id="6239.C26E6.9c.1"/>
<dbReference type="PaxDb" id="6239-C26E6.9c"/>
<dbReference type="PeptideAtlas" id="Q18221"/>
<dbReference type="EnsemblMetazoa" id="C26E6.9a.1">
    <molecule id="Q18221-1"/>
    <property type="protein sequence ID" value="C26E6.9a.1"/>
    <property type="gene ID" value="WBGene00004782"/>
</dbReference>
<dbReference type="EnsemblMetazoa" id="C26E6.9b.1">
    <molecule id="Q18221-2"/>
    <property type="protein sequence ID" value="C26E6.9b.1"/>
    <property type="gene ID" value="WBGene00004782"/>
</dbReference>
<dbReference type="EnsemblMetazoa" id="C26E6.9c.1">
    <molecule id="Q18221-3"/>
    <property type="protein sequence ID" value="C26E6.9c.1"/>
    <property type="gene ID" value="WBGene00004782"/>
</dbReference>
<dbReference type="GeneID" id="175662"/>
<dbReference type="KEGG" id="cel:CELE_C26E6.9"/>
<dbReference type="UCSC" id="C26E6.9a">
    <molecule id="Q18221-1"/>
    <property type="organism name" value="c. elegans"/>
</dbReference>
<dbReference type="AGR" id="WB:WBGene00004782"/>
<dbReference type="CTD" id="175662"/>
<dbReference type="WormBase" id="C26E6.9a">
    <molecule id="Q18221-1"/>
    <property type="protein sequence ID" value="CE27735"/>
    <property type="gene ID" value="WBGene00004782"/>
    <property type="gene designation" value="set-2"/>
</dbReference>
<dbReference type="WormBase" id="C26E6.9b">
    <molecule id="Q18221-2"/>
    <property type="protein sequence ID" value="CE01158"/>
    <property type="gene ID" value="WBGene00004782"/>
    <property type="gene designation" value="set-2"/>
</dbReference>
<dbReference type="WormBase" id="C26E6.9c">
    <molecule id="Q18221-3"/>
    <property type="protein sequence ID" value="CE27736"/>
    <property type="gene ID" value="WBGene00004782"/>
    <property type="gene designation" value="set-2"/>
</dbReference>
<dbReference type="eggNOG" id="KOG1080">
    <property type="taxonomic scope" value="Eukaryota"/>
</dbReference>
<dbReference type="GeneTree" id="ENSGT00940000169211"/>
<dbReference type="InParanoid" id="Q18221"/>
<dbReference type="OMA" id="YCTIPPK"/>
<dbReference type="OrthoDB" id="308383at2759"/>
<dbReference type="Reactome" id="R-CEL-3214841">
    <property type="pathway name" value="PKMTs methylate histone lysines"/>
</dbReference>
<dbReference type="Reactome" id="R-CEL-8936459">
    <property type="pathway name" value="RUNX1 regulates genes involved in megakaryocyte differentiation and platelet function"/>
</dbReference>
<dbReference type="Reactome" id="R-CEL-9772755">
    <property type="pathway name" value="Formation of WDR5-containing histone-modifying complexes"/>
</dbReference>
<dbReference type="PRO" id="PR:Q18221"/>
<dbReference type="Proteomes" id="UP000001940">
    <property type="component" value="Chromosome III"/>
</dbReference>
<dbReference type="Bgee" id="WBGene00004782">
    <property type="expression patterns" value="Expressed in germ line (C elegans) and 8 other cell types or tissues"/>
</dbReference>
<dbReference type="GO" id="GO:0005634">
    <property type="term" value="C:nucleus"/>
    <property type="evidence" value="ECO:0000314"/>
    <property type="project" value="WormBase"/>
</dbReference>
<dbReference type="GO" id="GO:0048188">
    <property type="term" value="C:Set1C/COMPASS complex"/>
    <property type="evidence" value="ECO:0000318"/>
    <property type="project" value="GO_Central"/>
</dbReference>
<dbReference type="GO" id="GO:0042800">
    <property type="term" value="F:histone H3K4 methyltransferase activity"/>
    <property type="evidence" value="ECO:0000314"/>
    <property type="project" value="WormBase"/>
</dbReference>
<dbReference type="GO" id="GO:0140999">
    <property type="term" value="F:histone H3K4 trimethyltransferase activity"/>
    <property type="evidence" value="ECO:0007669"/>
    <property type="project" value="RHEA"/>
</dbReference>
<dbReference type="GO" id="GO:0003723">
    <property type="term" value="F:RNA binding"/>
    <property type="evidence" value="ECO:0007669"/>
    <property type="project" value="UniProtKB-KW"/>
</dbReference>
<dbReference type="GO" id="GO:0008340">
    <property type="term" value="P:determination of adult lifespan"/>
    <property type="evidence" value="ECO:0000315"/>
    <property type="project" value="WormBase"/>
</dbReference>
<dbReference type="GO" id="GO:0032259">
    <property type="term" value="P:methylation"/>
    <property type="evidence" value="ECO:0007669"/>
    <property type="project" value="UniProtKB-KW"/>
</dbReference>
<dbReference type="GO" id="GO:0060290">
    <property type="term" value="P:transdifferentiation"/>
    <property type="evidence" value="ECO:0000315"/>
    <property type="project" value="WormBase"/>
</dbReference>
<dbReference type="CDD" id="cd19169">
    <property type="entry name" value="SET_SETD1"/>
    <property type="match status" value="1"/>
</dbReference>
<dbReference type="FunFam" id="2.170.270.10:FF:000010">
    <property type="entry name" value="Histone-lysine N-methyltransferase"/>
    <property type="match status" value="1"/>
</dbReference>
<dbReference type="Gene3D" id="3.30.70.330">
    <property type="match status" value="1"/>
</dbReference>
<dbReference type="Gene3D" id="2.170.270.10">
    <property type="entry name" value="SET domain"/>
    <property type="match status" value="1"/>
</dbReference>
<dbReference type="InterPro" id="IPR024657">
    <property type="entry name" value="COMPASS_Set1_N-SET"/>
</dbReference>
<dbReference type="InterPro" id="IPR012677">
    <property type="entry name" value="Nucleotide-bd_a/b_plait_sf"/>
</dbReference>
<dbReference type="InterPro" id="IPR003616">
    <property type="entry name" value="Post-SET_dom"/>
</dbReference>
<dbReference type="InterPro" id="IPR035979">
    <property type="entry name" value="RBD_domain_sf"/>
</dbReference>
<dbReference type="InterPro" id="IPR000504">
    <property type="entry name" value="RRM_dom"/>
</dbReference>
<dbReference type="InterPro" id="IPR044570">
    <property type="entry name" value="Set1-like"/>
</dbReference>
<dbReference type="InterPro" id="IPR001214">
    <property type="entry name" value="SET_dom"/>
</dbReference>
<dbReference type="InterPro" id="IPR046341">
    <property type="entry name" value="SET_dom_sf"/>
</dbReference>
<dbReference type="InterPro" id="IPR037841">
    <property type="entry name" value="SET_SETD1A/B"/>
</dbReference>
<dbReference type="PANTHER" id="PTHR45814">
    <property type="entry name" value="HISTONE-LYSINE N-METHYLTRANSFERASE SETD1"/>
    <property type="match status" value="1"/>
</dbReference>
<dbReference type="PANTHER" id="PTHR45814:SF2">
    <property type="entry name" value="HISTONE-LYSINE N-METHYLTRANSFERASE SETD1"/>
    <property type="match status" value="1"/>
</dbReference>
<dbReference type="Pfam" id="PF00076">
    <property type="entry name" value="RRM_1"/>
    <property type="match status" value="1"/>
</dbReference>
<dbReference type="Pfam" id="PF00856">
    <property type="entry name" value="SET"/>
    <property type="match status" value="1"/>
</dbReference>
<dbReference type="SMART" id="SM01291">
    <property type="entry name" value="N-SET"/>
    <property type="match status" value="1"/>
</dbReference>
<dbReference type="SMART" id="SM00508">
    <property type="entry name" value="PostSET"/>
    <property type="match status" value="1"/>
</dbReference>
<dbReference type="SMART" id="SM00360">
    <property type="entry name" value="RRM"/>
    <property type="match status" value="1"/>
</dbReference>
<dbReference type="SMART" id="SM00317">
    <property type="entry name" value="SET"/>
    <property type="match status" value="1"/>
</dbReference>
<dbReference type="SUPFAM" id="SSF54928">
    <property type="entry name" value="RNA-binding domain, RBD"/>
    <property type="match status" value="1"/>
</dbReference>
<dbReference type="SUPFAM" id="SSF82199">
    <property type="entry name" value="SET domain"/>
    <property type="match status" value="1"/>
</dbReference>
<dbReference type="PROSITE" id="PS50868">
    <property type="entry name" value="POST_SET"/>
    <property type="match status" value="1"/>
</dbReference>
<dbReference type="PROSITE" id="PS50280">
    <property type="entry name" value="SET"/>
    <property type="match status" value="1"/>
</dbReference>
<keyword id="KW-0025">Alternative splicing</keyword>
<keyword id="KW-0156">Chromatin regulator</keyword>
<keyword id="KW-0217">Developmental protein</keyword>
<keyword id="KW-0489">Methyltransferase</keyword>
<keyword id="KW-0539">Nucleus</keyword>
<keyword id="KW-1185">Reference proteome</keyword>
<keyword id="KW-0694">RNA-binding</keyword>
<keyword id="KW-0949">S-adenosyl-L-methionine</keyword>
<keyword id="KW-0804">Transcription</keyword>
<keyword id="KW-0805">Transcription regulation</keyword>
<keyword id="KW-0808">Transferase</keyword>
<accession>Q18221</accession>
<accession>Q95QU6</accession>
<accession>Q95QU7</accession>
<proteinExistence type="evidence at protein level"/>
<feature type="chain" id="PRO_0000097695" description="Histone-lysine N-methyltransferase set-2">
    <location>
        <begin position="1"/>
        <end position="1507"/>
    </location>
</feature>
<feature type="domain" description="RRM">
    <location>
        <begin position="128"/>
        <end position="199"/>
    </location>
</feature>
<feature type="domain" description="SET" evidence="3">
    <location>
        <begin position="1368"/>
        <end position="1485"/>
    </location>
</feature>
<feature type="domain" description="Post-SET" evidence="2">
    <location>
        <begin position="1491"/>
        <end position="1507"/>
    </location>
</feature>
<feature type="region of interest" description="Disordered" evidence="4">
    <location>
        <begin position="1"/>
        <end position="32"/>
    </location>
</feature>
<feature type="region of interest" description="Disordered" evidence="4">
    <location>
        <begin position="280"/>
        <end position="578"/>
    </location>
</feature>
<feature type="region of interest" description="Disordered" evidence="4">
    <location>
        <begin position="650"/>
        <end position="697"/>
    </location>
</feature>
<feature type="region of interest" description="Disordered" evidence="4">
    <location>
        <begin position="803"/>
        <end position="826"/>
    </location>
</feature>
<feature type="region of interest" description="Disordered" evidence="4">
    <location>
        <begin position="842"/>
        <end position="1058"/>
    </location>
</feature>
<feature type="region of interest" description="Disordered" evidence="4">
    <location>
        <begin position="1163"/>
        <end position="1199"/>
    </location>
</feature>
<feature type="short sequence motif" description="RxxxRR motif" evidence="1">
    <location>
        <begin position="1340"/>
        <end position="1345"/>
    </location>
</feature>
<feature type="compositionally biased region" description="Basic residues" evidence="4">
    <location>
        <begin position="9"/>
        <end position="18"/>
    </location>
</feature>
<feature type="compositionally biased region" description="Pro residues" evidence="4">
    <location>
        <begin position="296"/>
        <end position="315"/>
    </location>
</feature>
<feature type="compositionally biased region" description="Low complexity" evidence="4">
    <location>
        <begin position="316"/>
        <end position="327"/>
    </location>
</feature>
<feature type="compositionally biased region" description="Polar residues" evidence="4">
    <location>
        <begin position="331"/>
        <end position="342"/>
    </location>
</feature>
<feature type="compositionally biased region" description="Basic and acidic residues" evidence="4">
    <location>
        <begin position="413"/>
        <end position="444"/>
    </location>
</feature>
<feature type="compositionally biased region" description="Low complexity" evidence="4">
    <location>
        <begin position="456"/>
        <end position="465"/>
    </location>
</feature>
<feature type="compositionally biased region" description="Basic residues" evidence="4">
    <location>
        <begin position="478"/>
        <end position="488"/>
    </location>
</feature>
<feature type="compositionally biased region" description="Polar residues" evidence="4">
    <location>
        <begin position="566"/>
        <end position="575"/>
    </location>
</feature>
<feature type="compositionally biased region" description="Basic and acidic residues" evidence="4">
    <location>
        <begin position="668"/>
        <end position="680"/>
    </location>
</feature>
<feature type="compositionally biased region" description="Basic and acidic residues" evidence="4">
    <location>
        <begin position="803"/>
        <end position="823"/>
    </location>
</feature>
<feature type="compositionally biased region" description="Basic residues" evidence="4">
    <location>
        <begin position="846"/>
        <end position="868"/>
    </location>
</feature>
<feature type="compositionally biased region" description="Low complexity" evidence="4">
    <location>
        <begin position="869"/>
        <end position="908"/>
    </location>
</feature>
<feature type="compositionally biased region" description="Polar residues" evidence="4">
    <location>
        <begin position="941"/>
        <end position="951"/>
    </location>
</feature>
<feature type="compositionally biased region" description="Low complexity" evidence="4">
    <location>
        <begin position="958"/>
        <end position="971"/>
    </location>
</feature>
<feature type="compositionally biased region" description="Basic and acidic residues" evidence="4">
    <location>
        <begin position="973"/>
        <end position="982"/>
    </location>
</feature>
<feature type="compositionally biased region" description="Low complexity" evidence="4">
    <location>
        <begin position="990"/>
        <end position="1007"/>
    </location>
</feature>
<feature type="compositionally biased region" description="Basic and acidic residues" evidence="4">
    <location>
        <begin position="1015"/>
        <end position="1047"/>
    </location>
</feature>
<feature type="compositionally biased region" description="Pro residues" evidence="4">
    <location>
        <begin position="1179"/>
        <end position="1190"/>
    </location>
</feature>
<feature type="binding site" evidence="3">
    <location>
        <position position="1484"/>
    </location>
    <ligand>
        <name>S-adenosyl-L-methionine</name>
        <dbReference type="ChEBI" id="CHEBI:59789"/>
    </ligand>
</feature>
<feature type="splice variant" id="VSP_007217" description="In isoform b." evidence="15">
    <location>
        <begin position="1"/>
        <end position="768"/>
    </location>
</feature>
<feature type="splice variant" id="VSP_007218" description="In isoform b." evidence="15">
    <original>MDELSRKVAEDIRQQIMRQCFAALDEKLHLKAIADEEKRKKEREEKARQEAEKPSNHLIADMM</original>
    <variation>MYNNSAPYLNHSSLNTVRKKVVTVRRVLPSLPPPPPPPPSLYPPCSVFKVPYIPQRVYRSINS</variation>
    <location>
        <begin position="769"/>
        <end position="831"/>
    </location>
</feature>
<feature type="splice variant" id="VSP_038347" description="In isoform c." evidence="15">
    <original>M</original>
    <variation>MPSQ</variation>
    <location>
        <position position="831"/>
    </location>
</feature>
<name>SET1_CAEEL</name>
<reference key="1">
    <citation type="journal article" date="1998" name="Science">
        <title>Genome sequence of the nematode C. elegans: a platform for investigating biology.</title>
        <authorList>
            <consortium name="The C. elegans sequencing consortium"/>
        </authorList>
    </citation>
    <scope>NUCLEOTIDE SEQUENCE [LARGE SCALE GENOMIC DNA]</scope>
    <scope>ALTERNATIVE SPLICING</scope>
    <source>
        <strain>Bristol N2</strain>
    </source>
</reference>
<reference key="2">
    <citation type="journal article" date="2001" name="Genetics">
        <title>Depletion of a novel SET-domain protein enhances the sterility of mes-3 and mes-4 mutants of Caenorhabditis elegans.</title>
        <authorList>
            <person name="Xu L."/>
            <person name="Strome S."/>
        </authorList>
    </citation>
    <scope>FUNCTION</scope>
    <scope>SUBCELLULAR LOCATION</scope>
    <scope>TISSUE SPECIFICITY</scope>
    <scope>ALTERNATIVE SPLICING</scope>
</reference>
<reference key="3">
    <citation type="journal article" date="2002" name="Genetics">
        <title>A targeted RNAi screen for genes involved in chromosome morphogenesis and nuclear organization in the Caenorhabditis elegans germline.</title>
        <authorList>
            <person name="Colaiacovo M.P."/>
            <person name="Stanfield G.M."/>
            <person name="Reddy K.C."/>
            <person name="Reinke V."/>
            <person name="Kim S.K."/>
            <person name="Villeneuve A.M."/>
        </authorList>
    </citation>
    <scope>FUNCTION</scope>
</reference>
<reference key="4">
    <citation type="journal article" date="2003" name="Mol. Cell. Biol.">
        <title>Telomeric position effect variegation in Saccharomyces cerevisiae by Caenorhabditis elegans linker histones suggests a mechanistic connection between germ line and telomeric silencing.</title>
        <authorList>
            <person name="Jedrusik M.A."/>
            <person name="Schulze E."/>
        </authorList>
    </citation>
    <scope>FUNCTION</scope>
</reference>
<reference key="5">
    <citation type="journal article" date="2007" name="Dev. Biol.">
        <title>Antagonistic functions of SET-2/SET1 and HPL/HP1 proteins in C. elegans development.</title>
        <authorList>
            <person name="Simonet T."/>
            <person name="Dulermo R."/>
            <person name="Schott S."/>
            <person name="Palladino F."/>
        </authorList>
    </citation>
    <scope>FUNCTION</scope>
</reference>
<reference key="6">
    <citation type="journal article" date="2010" name="Nature">
        <title>Members of the H3K4 trimethylation complex regulate lifespan in a germline-dependent manner in C. elegans.</title>
        <authorList>
            <person name="Greer E.L."/>
            <person name="Maures T.J."/>
            <person name="Hauswirth A.G."/>
            <person name="Green E.M."/>
            <person name="Leeman D.S."/>
            <person name="Maro G.S."/>
            <person name="Han S."/>
            <person name="Banko M.R."/>
            <person name="Gozani O."/>
            <person name="Brunet A."/>
        </authorList>
    </citation>
    <scope>FUNCTION</scope>
    <scope>CATALYTIC ACTIVITY</scope>
    <scope>DISRUPTION PHENOTYPE</scope>
</reference>
<reference key="7">
    <citation type="journal article" date="2011" name="Nature">
        <title>Transgenerational epigenetic inheritance of longevity in Caenorhabditis elegans.</title>
        <authorList>
            <person name="Greer E.L."/>
            <person name="Maures T.J."/>
            <person name="Ucar D."/>
            <person name="Hauswirth A.G."/>
            <person name="Mancini E."/>
            <person name="Lim J.P."/>
            <person name="Benayoun B.A."/>
            <person name="Shi Y."/>
            <person name="Brunet A."/>
        </authorList>
    </citation>
    <scope>FUNCTION</scope>
</reference>
<reference key="8">
    <citation type="journal article" date="2011" name="Proc. Natl. Acad. Sci. U.S.A.">
        <title>Caenorhabditis elegans chromatin-associated proteins SET-2 and ASH-2 are differentially required for histone H3 Lys 4 methylation in embryos and adult germ cells.</title>
        <authorList>
            <person name="Xiao Y."/>
            <person name="Bedet C."/>
            <person name="Robert V.J."/>
            <person name="Simonet T."/>
            <person name="Dunkelbarger S."/>
            <person name="Rakotomalala C."/>
            <person name="Soete G."/>
            <person name="Korswagen H.C."/>
            <person name="Strome S."/>
            <person name="Palladino F."/>
        </authorList>
    </citation>
    <scope>FUNCTION</scope>
    <scope>CATALYTIC ACTIVITY</scope>
    <scope>INTERACTION WITH WDR-5.1</scope>
</reference>
<reference key="9">
    <citation type="journal article" date="2014" name="Science">
        <title>Sequential histone-modifying activities determine the robustness of transdifferentiation.</title>
        <authorList>
            <person name="Zuryn S."/>
            <person name="Ahier A."/>
            <person name="Portoso M."/>
            <person name="White E.R."/>
            <person name="Morin M.C."/>
            <person name="Margueron R."/>
            <person name="Jarriault S."/>
        </authorList>
    </citation>
    <scope>FUNCTION</scope>
    <scope>DISRUPTION PHENOTYPE</scope>
</reference>
<reference key="10">
    <citation type="journal article" date="2017" name="Nature">
        <title>Mono-unsaturated fatty acids link H3K4me3 modifiers to C. elegans lifespan.</title>
        <authorList>
            <person name="Han S."/>
            <person name="Schroeder E.A."/>
            <person name="Silva-Garcia C.G."/>
            <person name="Hebestreit K."/>
            <person name="Mair W.B."/>
            <person name="Brunet A."/>
        </authorList>
    </citation>
    <scope>FUNCTION</scope>
    <scope>DISRUPTION PHENOTYPE</scope>
</reference>
<reference evidence="15" key="11">
    <citation type="journal article" date="2019" name="Nucleic Acids Res.">
        <title>Physical and functional interaction between SET1/COMPASS complex component CFP-1 and a Sin3S HDAC complex in C. elegans.</title>
        <authorList>
            <person name="Beurton F."/>
            <person name="Stempor P."/>
            <person name="Caron M."/>
            <person name="Appert A."/>
            <person name="Dong Y."/>
            <person name="Chen R.A."/>
            <person name="Cluet D."/>
            <person name="Coute Y."/>
            <person name="Herbette M."/>
            <person name="Huang N."/>
            <person name="Polveche H."/>
            <person name="Spichty M."/>
            <person name="Bedet C."/>
            <person name="Ahringer J."/>
            <person name="Palladino F."/>
        </authorList>
    </citation>
    <scope>IDENTIFICATION IN THE SET2 COMPLEX</scope>
</reference>
<organism>
    <name type="scientific">Caenorhabditis elegans</name>
    <dbReference type="NCBI Taxonomy" id="6239"/>
    <lineage>
        <taxon>Eukaryota</taxon>
        <taxon>Metazoa</taxon>
        <taxon>Ecdysozoa</taxon>
        <taxon>Nematoda</taxon>
        <taxon>Chromadorea</taxon>
        <taxon>Rhabditida</taxon>
        <taxon>Rhabditina</taxon>
        <taxon>Rhabditomorpha</taxon>
        <taxon>Rhabditoidea</taxon>
        <taxon>Rhabditidae</taxon>
        <taxon>Peloderinae</taxon>
        <taxon>Caenorhabditis</taxon>
    </lineage>
</organism>
<comment type="function">
    <text evidence="1 5 6 7 8 9 10 11 12 13">Catalytic component of the COMPASS (Set1C) complex that specifically mono-, di- and trimethylates histone H3 to form H3K4me1/2/3 (PubMed:20555324, PubMed:21527717). Binds RNAs which might negatively affect its histone methyltransferase activity (By similarity). COMPASS recognizes ubiquitinated H2B on one face of the nucleosome which stimulates the methylation of H3 on the opposing face (By similarity). H3 'Lys-4' methylation represents a specific tag for epigenetic transcriptional activation (PubMed:21527717). Implicated in the epigenetic inheritance of lifespan over several generations (PubMed:22012258). Acts in the germline to limit the longevity of the soma, probably by regulating a lipid metabolism pathway that signals from the germline to the intestine, thereby preventing accumulation of mono-unsaturated fatty acids (PubMed:20555324, PubMed:28379943). Methylation in the germline is required for germline development and fertility, possibly by ensuring genome stability (PubMed:12242227, PubMed:21527717). May act redundantly with mes-3 and mes-4 proteins in the development of a fertile germline (PubMed:11729150). Required for RNAi (PubMed:17967446). Functions as an antagonist of hpl-1 and hpl-2 activity in growth and somatic gonad development (PubMed:17967446). Cooperates with jmjd-3.1 and egl-27 to ensure robust transdifferentiation of the Y rectal cell to the PDA motor neuron during larval development (PubMed:25124442).</text>
</comment>
<comment type="catalytic activity">
    <reaction evidence="1">
        <text>L-lysyl(4)-[histone H3] + 3 S-adenosyl-L-methionine = N(6),N(6),N(6)-trimethyl-L-lysyl(4)-[histone H3] + 3 S-adenosyl-L-homocysteine + 3 H(+)</text>
        <dbReference type="Rhea" id="RHEA:60260"/>
        <dbReference type="Rhea" id="RHEA-COMP:15537"/>
        <dbReference type="Rhea" id="RHEA-COMP:15547"/>
        <dbReference type="ChEBI" id="CHEBI:15378"/>
        <dbReference type="ChEBI" id="CHEBI:29969"/>
        <dbReference type="ChEBI" id="CHEBI:57856"/>
        <dbReference type="ChEBI" id="CHEBI:59789"/>
        <dbReference type="ChEBI" id="CHEBI:61961"/>
        <dbReference type="EC" id="2.1.1.354"/>
    </reaction>
</comment>
<comment type="catalytic activity">
    <reaction evidence="9 10">
        <text>N(6)-methyl-L-lysyl(4)-[histone H3] + S-adenosyl-L-methionine = N(6),N(6)-dimethyl-L-lysyl(4)-[histone H3] + S-adenosyl-L-homocysteine + H(+)</text>
        <dbReference type="Rhea" id="RHEA:60268"/>
        <dbReference type="Rhea" id="RHEA-COMP:15540"/>
        <dbReference type="Rhea" id="RHEA-COMP:15543"/>
        <dbReference type="ChEBI" id="CHEBI:15378"/>
        <dbReference type="ChEBI" id="CHEBI:57856"/>
        <dbReference type="ChEBI" id="CHEBI:59789"/>
        <dbReference type="ChEBI" id="CHEBI:61929"/>
        <dbReference type="ChEBI" id="CHEBI:61976"/>
    </reaction>
</comment>
<comment type="catalytic activity">
    <reaction evidence="9 10">
        <text>N(6),N(6)-dimethyl-L-lysyl(4)-[histone H3] + S-adenosyl-L-methionine = N(6),N(6),N(6)-trimethyl-L-lysyl(4)-[histone H3] + S-adenosyl-L-homocysteine + H(+)</text>
        <dbReference type="Rhea" id="RHEA:60272"/>
        <dbReference type="Rhea" id="RHEA-COMP:15537"/>
        <dbReference type="Rhea" id="RHEA-COMP:15540"/>
        <dbReference type="ChEBI" id="CHEBI:15378"/>
        <dbReference type="ChEBI" id="CHEBI:57856"/>
        <dbReference type="ChEBI" id="CHEBI:59789"/>
        <dbReference type="ChEBI" id="CHEBI:61961"/>
        <dbReference type="ChEBI" id="CHEBI:61976"/>
    </reaction>
</comment>
<comment type="subunit">
    <text evidence="14">Component of the Set1C/COMPASS complex (also known as the SET2 complex), which contains at least set-2, swd-2.1, cfp-1, rbbp-5, wdr-5.1, dpy-30 and ash-2.</text>
</comment>
<comment type="subcellular location">
    <subcellularLocation>
        <location evidence="5">Nucleus</location>
    </subcellularLocation>
    <text>Localized in mitotic and mid-late-stage meiotic nuclei but is undetectable in early pachytene nuclei.</text>
</comment>
<comment type="alternative products">
    <event type="alternative splicing"/>
    <isoform>
        <id>Q18221-1</id>
        <name>a</name>
        <name>L</name>
        <sequence type="displayed"/>
    </isoform>
    <isoform>
        <id>Q18221-2</id>
        <name>b</name>
        <name>S</name>
        <sequence type="described" ref="VSP_007217 VSP_007218"/>
    </isoform>
    <isoform>
        <id>Q18221-3</id>
        <name>c</name>
        <sequence type="described" ref="VSP_038347"/>
    </isoform>
</comment>
<comment type="tissue specificity">
    <text evidence="5">Expressed in all cells of embryo. In L1 larva, it is predominantly expressed in Z2 and Z3 primordial germ cells. In adults, it is predominantly expressed in the germline.</text>
</comment>
<comment type="developmental stage">
    <text>Expressed throughout embryogenesis.</text>
</comment>
<comment type="disruption phenotype">
    <text evidence="9 12 13">RNAi-mediated knockdown results in disruption of invariant Y-to-PDA transdifferentiation (PubMed:25124442). Results in decreased trimethylation at 'Lys-4' of histone H3 (PubMed:20555324). Leads to an extension of lifespan (PubMed:20555324). Leads to a deregulation of fat metabolism and to an enrichment of mono-unsaturated fatty acids (PubMed:28379943).</text>
</comment>
<comment type="similarity">
    <text evidence="3">Belongs to the class V-like SAM-binding methyltransferase superfamily.</text>
</comment>
<evidence type="ECO:0000250" key="1">
    <source>
        <dbReference type="UniProtKB" id="P38827"/>
    </source>
</evidence>
<evidence type="ECO:0000255" key="2">
    <source>
        <dbReference type="PROSITE-ProRule" id="PRU00155"/>
    </source>
</evidence>
<evidence type="ECO:0000255" key="3">
    <source>
        <dbReference type="PROSITE-ProRule" id="PRU00190"/>
    </source>
</evidence>
<evidence type="ECO:0000256" key="4">
    <source>
        <dbReference type="SAM" id="MobiDB-lite"/>
    </source>
</evidence>
<evidence type="ECO:0000269" key="5">
    <source>
    </source>
</evidence>
<evidence type="ECO:0000269" key="6">
    <source>
    </source>
</evidence>
<evidence type="ECO:0000269" key="7">
    <source>
    </source>
</evidence>
<evidence type="ECO:0000269" key="8">
    <source>
    </source>
</evidence>
<evidence type="ECO:0000269" key="9">
    <source>
    </source>
</evidence>
<evidence type="ECO:0000269" key="10">
    <source>
    </source>
</evidence>
<evidence type="ECO:0000269" key="11">
    <source>
    </source>
</evidence>
<evidence type="ECO:0000269" key="12">
    <source>
    </source>
</evidence>
<evidence type="ECO:0000269" key="13">
    <source>
    </source>
</evidence>
<evidence type="ECO:0000269" key="14">
    <source>
    </source>
</evidence>
<evidence type="ECO:0000305" key="15"/>
<gene>
    <name type="primary">set-2</name>
    <name type="ORF">C26E6.9</name>
</gene>
<protein>
    <recommendedName>
        <fullName>Histone-lysine N-methyltransferase set-2</fullName>
        <ecNumber evidence="1">2.1.1.354</ecNumber>
    </recommendedName>
    <alternativeName>
        <fullName>SET domain-containing protein 2</fullName>
    </alternativeName>
</protein>